<reference key="1">
    <citation type="journal article" date="2005" name="Nucleic Acids Res.">
        <title>Genomic blueprint of Hahella chejuensis, a marine microbe producing an algicidal agent.</title>
        <authorList>
            <person name="Jeong H."/>
            <person name="Yim J.H."/>
            <person name="Lee C."/>
            <person name="Choi S.-H."/>
            <person name="Park Y.K."/>
            <person name="Yoon S.H."/>
            <person name="Hur C.-G."/>
            <person name="Kang H.-Y."/>
            <person name="Kim D."/>
            <person name="Lee H.H."/>
            <person name="Park K.H."/>
            <person name="Park S.-H."/>
            <person name="Park H.-S."/>
            <person name="Lee H.K."/>
            <person name="Oh T.K."/>
            <person name="Kim J.F."/>
        </authorList>
    </citation>
    <scope>NUCLEOTIDE SEQUENCE [LARGE SCALE GENOMIC DNA]</scope>
    <source>
        <strain>KCTC 2396</strain>
    </source>
</reference>
<protein>
    <recommendedName>
        <fullName evidence="1">Glycine--tRNA ligase beta subunit</fullName>
        <ecNumber evidence="1">6.1.1.14</ecNumber>
    </recommendedName>
    <alternativeName>
        <fullName evidence="1">Glycyl-tRNA synthetase beta subunit</fullName>
        <shortName evidence="1">GlyRS</shortName>
    </alternativeName>
</protein>
<evidence type="ECO:0000255" key="1">
    <source>
        <dbReference type="HAMAP-Rule" id="MF_00255"/>
    </source>
</evidence>
<gene>
    <name evidence="1" type="primary">glyS</name>
    <name type="ordered locus">HCH_00021</name>
</gene>
<accession>Q2SQY0</accession>
<feature type="chain" id="PRO_1000006367" description="Glycine--tRNA ligase beta subunit">
    <location>
        <begin position="1"/>
        <end position="692"/>
    </location>
</feature>
<sequence length="692" mass="77189">MNHQDFLVEIGAEELPPKALRQLAEAFAQGIRQRLEKAQLSFSELTWYAAPRRLAVHVSGLAEKQPDLEVEKRGPALQAAFDAAGAPTKACEGFARSCGTTPDKLEKLETDKGVWLVFRSKQAGAPTTGLLPAIVEESLAALPIPKRMRWGARRTEFVRPVHWIIMLFGEKVIDCEILGLKAGNTTLGHRFHHPAPIEIATPANYKDALKNTGYVMADFEERKALIRQQVEAIAKQTSGMAVIDEELLEEVASLNEWPTALMGRFEDRFLEVPAEALISTMKGNQKYFHVVDAEGRMLPYFITVANIESKDPQQVIDGNERVIRPRLSDAAFFFSTDKKRTLASRLEDLKPIVFQQQLGTVYDKAIRVGKLAAKIAAKIDSNPEWAQRAGELSKTDLATEMVMEFPELQGTMGRYYAAIDSEPEEVSMAQEEQYLPRFAGDQLPTTLTGCAVSLADKLDTIVGIFGINQPPTGAKDPFGLRRAALGVLRILVEKKLDLDLAECVQWAQELHGDLPAENLETAVVDYMLDRFRAWYEEAGVPTEVFLSVLARRPTKPVEFDQRVLAVAEFLKLDAAQALAAANKRVSNILSKEQVDISAESANPELFTEEAEKNLFRALQEKSESARPYIEQRNFTQALQQLAELKDVIDLFFDKVMVMVDDPAIRSNRMTLLASLRHVFLQVADISLLQNKA</sequence>
<keyword id="KW-0030">Aminoacyl-tRNA synthetase</keyword>
<keyword id="KW-0067">ATP-binding</keyword>
<keyword id="KW-0963">Cytoplasm</keyword>
<keyword id="KW-0436">Ligase</keyword>
<keyword id="KW-0547">Nucleotide-binding</keyword>
<keyword id="KW-0648">Protein biosynthesis</keyword>
<keyword id="KW-1185">Reference proteome</keyword>
<comment type="catalytic activity">
    <reaction evidence="1">
        <text>tRNA(Gly) + glycine + ATP = glycyl-tRNA(Gly) + AMP + diphosphate</text>
        <dbReference type="Rhea" id="RHEA:16013"/>
        <dbReference type="Rhea" id="RHEA-COMP:9664"/>
        <dbReference type="Rhea" id="RHEA-COMP:9683"/>
        <dbReference type="ChEBI" id="CHEBI:30616"/>
        <dbReference type="ChEBI" id="CHEBI:33019"/>
        <dbReference type="ChEBI" id="CHEBI:57305"/>
        <dbReference type="ChEBI" id="CHEBI:78442"/>
        <dbReference type="ChEBI" id="CHEBI:78522"/>
        <dbReference type="ChEBI" id="CHEBI:456215"/>
        <dbReference type="EC" id="6.1.1.14"/>
    </reaction>
</comment>
<comment type="subunit">
    <text evidence="1">Tetramer of two alpha and two beta subunits.</text>
</comment>
<comment type="subcellular location">
    <subcellularLocation>
        <location evidence="1">Cytoplasm</location>
    </subcellularLocation>
</comment>
<comment type="similarity">
    <text evidence="1">Belongs to the class-II aminoacyl-tRNA synthetase family.</text>
</comment>
<organism>
    <name type="scientific">Hahella chejuensis (strain KCTC 2396)</name>
    <dbReference type="NCBI Taxonomy" id="349521"/>
    <lineage>
        <taxon>Bacteria</taxon>
        <taxon>Pseudomonadati</taxon>
        <taxon>Pseudomonadota</taxon>
        <taxon>Gammaproteobacteria</taxon>
        <taxon>Oceanospirillales</taxon>
        <taxon>Hahellaceae</taxon>
        <taxon>Hahella</taxon>
    </lineage>
</organism>
<proteinExistence type="inferred from homology"/>
<name>SYGB_HAHCH</name>
<dbReference type="EC" id="6.1.1.14" evidence="1"/>
<dbReference type="EMBL" id="CP000155">
    <property type="protein sequence ID" value="ABC26944.1"/>
    <property type="molecule type" value="Genomic_DNA"/>
</dbReference>
<dbReference type="RefSeq" id="WP_011394021.1">
    <property type="nucleotide sequence ID" value="NC_007645.1"/>
</dbReference>
<dbReference type="SMR" id="Q2SQY0"/>
<dbReference type="STRING" id="349521.HCH_00021"/>
<dbReference type="KEGG" id="hch:HCH_00021"/>
<dbReference type="eggNOG" id="COG0751">
    <property type="taxonomic scope" value="Bacteria"/>
</dbReference>
<dbReference type="HOGENOM" id="CLU_007220_2_2_6"/>
<dbReference type="OrthoDB" id="9775440at2"/>
<dbReference type="Proteomes" id="UP000000238">
    <property type="component" value="Chromosome"/>
</dbReference>
<dbReference type="GO" id="GO:0005829">
    <property type="term" value="C:cytosol"/>
    <property type="evidence" value="ECO:0007669"/>
    <property type="project" value="TreeGrafter"/>
</dbReference>
<dbReference type="GO" id="GO:0004814">
    <property type="term" value="F:arginine-tRNA ligase activity"/>
    <property type="evidence" value="ECO:0007669"/>
    <property type="project" value="InterPro"/>
</dbReference>
<dbReference type="GO" id="GO:0005524">
    <property type="term" value="F:ATP binding"/>
    <property type="evidence" value="ECO:0007669"/>
    <property type="project" value="UniProtKB-UniRule"/>
</dbReference>
<dbReference type="GO" id="GO:0004820">
    <property type="term" value="F:glycine-tRNA ligase activity"/>
    <property type="evidence" value="ECO:0007669"/>
    <property type="project" value="UniProtKB-UniRule"/>
</dbReference>
<dbReference type="GO" id="GO:0006420">
    <property type="term" value="P:arginyl-tRNA aminoacylation"/>
    <property type="evidence" value="ECO:0007669"/>
    <property type="project" value="InterPro"/>
</dbReference>
<dbReference type="GO" id="GO:0006426">
    <property type="term" value="P:glycyl-tRNA aminoacylation"/>
    <property type="evidence" value="ECO:0007669"/>
    <property type="project" value="UniProtKB-UniRule"/>
</dbReference>
<dbReference type="HAMAP" id="MF_00255">
    <property type="entry name" value="Gly_tRNA_synth_beta"/>
    <property type="match status" value="1"/>
</dbReference>
<dbReference type="InterPro" id="IPR008909">
    <property type="entry name" value="DALR_anticod-bd"/>
</dbReference>
<dbReference type="InterPro" id="IPR015944">
    <property type="entry name" value="Gly-tRNA-synth_bsu"/>
</dbReference>
<dbReference type="InterPro" id="IPR006194">
    <property type="entry name" value="Gly-tRNA-synth_heterodimer"/>
</dbReference>
<dbReference type="NCBIfam" id="TIGR00211">
    <property type="entry name" value="glyS"/>
    <property type="match status" value="1"/>
</dbReference>
<dbReference type="PANTHER" id="PTHR30075:SF2">
    <property type="entry name" value="GLYCINE--TRNA LIGASE, CHLOROPLASTIC_MITOCHONDRIAL 2"/>
    <property type="match status" value="1"/>
</dbReference>
<dbReference type="PANTHER" id="PTHR30075">
    <property type="entry name" value="GLYCYL-TRNA SYNTHETASE"/>
    <property type="match status" value="1"/>
</dbReference>
<dbReference type="Pfam" id="PF05746">
    <property type="entry name" value="DALR_1"/>
    <property type="match status" value="1"/>
</dbReference>
<dbReference type="Pfam" id="PF02092">
    <property type="entry name" value="tRNA_synt_2f"/>
    <property type="match status" value="1"/>
</dbReference>
<dbReference type="PRINTS" id="PR01045">
    <property type="entry name" value="TRNASYNTHGB"/>
</dbReference>
<dbReference type="SMART" id="SM00836">
    <property type="entry name" value="DALR_1"/>
    <property type="match status" value="1"/>
</dbReference>
<dbReference type="SUPFAM" id="SSF109604">
    <property type="entry name" value="HD-domain/PDEase-like"/>
    <property type="match status" value="1"/>
</dbReference>
<dbReference type="PROSITE" id="PS50861">
    <property type="entry name" value="AA_TRNA_LIGASE_II_GLYAB"/>
    <property type="match status" value="1"/>
</dbReference>